<proteinExistence type="inferred from homology"/>
<protein>
    <recommendedName>
        <fullName evidence="1">DNA-directed RNA polymerase subunit beta''</fullName>
        <ecNumber evidence="1">2.7.7.6</ecNumber>
    </recommendedName>
    <alternativeName>
        <fullName evidence="1">PEP</fullName>
    </alternativeName>
    <alternativeName>
        <fullName evidence="1">Plastid-encoded RNA polymerase subunit beta''</fullName>
        <shortName evidence="1">RNA polymerase subunit beta''</shortName>
    </alternativeName>
</protein>
<geneLocation type="cyanelle"/>
<reference key="1">
    <citation type="journal article" date="1995" name="Plant Mol. Biol. Rep.">
        <title>Nucleotide sequence of the cyanelle DNA from Cyanophora paradoxa.</title>
        <authorList>
            <person name="Stirewalt V.L."/>
            <person name="Michalowski C.B."/>
            <person name="Loeffelhardt W."/>
            <person name="Bohnert H.J."/>
            <person name="Bryant D.A."/>
        </authorList>
    </citation>
    <scope>NUCLEOTIDE SEQUENCE [LARGE SCALE GENOMIC DNA]</scope>
    <source>
        <strain>UTEX LB 555 / Pringsheim</strain>
    </source>
</reference>
<reference key="2">
    <citation type="book" date="1997" name="Eukaryotism and symbiosis">
        <title>The complete sequence of the cyanelle genome of Cyanophora paradoxa: the genetic complexity of a primitive plastid.</title>
        <editorList>
            <person name="Schenk H.E.A."/>
            <person name="Herrmann R."/>
            <person name="Jeon K.W."/>
            <person name="Mueller N.E."/>
            <person name="Schwemmler W."/>
        </editorList>
        <authorList>
            <person name="Loeffelhardt W."/>
            <person name="Stirewalt V.L."/>
            <person name="Michalowski C.B."/>
            <person name="Annarella M."/>
            <person name="Farley J.Y."/>
            <person name="Schluchter W.M."/>
            <person name="Chung S."/>
            <person name="Newmann-Spallart C."/>
            <person name="Steiner J.M."/>
            <person name="Jakowitsch J."/>
            <person name="Bohnert H.J."/>
            <person name="Bryant D.A."/>
        </authorList>
    </citation>
    <scope>NUCLEOTIDE SEQUENCE [LARGE SCALE GENOMIC DNA]</scope>
    <source>
        <strain>UTEX LB 555 / Pringsheim</strain>
    </source>
</reference>
<accession>P48120</accession>
<feature type="chain" id="PRO_0000067922" description="DNA-directed RNA polymerase subunit beta''">
    <location>
        <begin position="1"/>
        <end position="1265"/>
    </location>
</feature>
<feature type="binding site" evidence="1">
    <location>
        <position position="223"/>
    </location>
    <ligand>
        <name>Zn(2+)</name>
        <dbReference type="ChEBI" id="CHEBI:29105"/>
    </ligand>
</feature>
<feature type="binding site" evidence="1">
    <location>
        <position position="297"/>
    </location>
    <ligand>
        <name>Zn(2+)</name>
        <dbReference type="ChEBI" id="CHEBI:29105"/>
    </ligand>
</feature>
<feature type="binding site" evidence="1">
    <location>
        <position position="304"/>
    </location>
    <ligand>
        <name>Zn(2+)</name>
        <dbReference type="ChEBI" id="CHEBI:29105"/>
    </ligand>
</feature>
<feature type="binding site" evidence="1">
    <location>
        <position position="307"/>
    </location>
    <ligand>
        <name>Zn(2+)</name>
        <dbReference type="ChEBI" id="CHEBI:29105"/>
    </ligand>
</feature>
<sequence length="1265" mass="142137">MSENLFSKKKIFFNQTIGKKEVKNVIAWAFTSYGAARTAYLVEQLKDLGFHYATKAGISLSVEDLLIPPLKDSLLQTAENEIKATLNRYLLGEITEVERFQKVIDIWHRTSETLKDEVVDYFKSTDPLNSLYMMSFSGARGNLSQVHQLVGMRGLMADPQGEIIDFPIRSNFKEGLTTTEYLISSYGARKGVVDTALRTADSGYLTRRLVDIAQEVIIREIDCETPRGVILTALKENGKILISLKDRLVGRVLLHNLYHPKTHSLIAQKNESISVLLADDIIKAGLKEVWIRSPLTCKATRSVCQYCYGWNLAHGRLVELGEAVGIIAAQSIGEPGTQLTMRTFHTGGVFTAEVAKQITAPFPGRIYYPLNTTFREIRTRYGDNAWWVENNAKLRLEGENGKRVSFNLTQGSIIRIKDQSWVETNDLLAEIASTAPNTRRAKEKTTRELRTDIAGEVYFQNLEIDEAGGQVDTAGGSIWILGGNVYNLSSNFDVILKNGDFILNGSILARTQFISQYGGYVRLTDDNLTVEVIPASLKIQNAKIFIDETDQPCLHFKNNETFELKIQNETQLKHGQVVAERYLTTEMGGIIRYADLDAKTTNKNGYEITKSGSLLWIPEETHEVNTEAKNVLVKNGQYIPSGTQLIKNKKIRNKHSGVVELVHKKNFVIEIIIKPGIVLKIKNNVSFSKKAKRFIQPGEYLFSKFVVEDLRYLDYIITSTGIILLLRPVVEYKVESPKTIIRDDKNHLKISSIQSILYKDGERIKSVQGIELFKIQLKLQVRKGLKHLPIKTNFIPSSQNSFELEFLIIESILPKNDKYFDSTVLESLAKAQTKILVKNNQLVKKGELIAQIEIISINQGEIRWIGDNTAKQIRRLLLITEKQIVTIPIQNLTKLKNKNLNLGNFIRAGEEIEETIKIPNSGQIIEITSTYIRLRISRPYLISARAIIRVLTGDLVQSGESLALLVFERAKTGDIIQGLPRIEELLEARKPKDNCVLSTHPGFTQLYYSETIELKIKSLDKINTLLELQPGVFPTVTNNQFIEAGAPLSEGDISVHEILEIFFNLYFKNRVNCLSLADAIHLSLQKIQQFLVSEVQSVYQSQGIDISDKHIEIIIKQMTNKVKIEEGGDTTLLPNELIEFQQIEKMNEKFSTSNGQLASYTPILLGITKSSLNTQSFISAASFQETTRVLAKAAVEGKIDQLRGLKENVIIGNLIPAGTGFSAYNDNAVFQNEDIESIEVKTSVLNSPAESDTNSDLDDIILNKD</sequence>
<comment type="function">
    <text evidence="1">DNA-dependent RNA polymerase catalyzes the transcription of DNA into RNA using the four ribonucleoside triphosphates as substrates.</text>
</comment>
<comment type="catalytic activity">
    <reaction evidence="1">
        <text>RNA(n) + a ribonucleoside 5'-triphosphate = RNA(n+1) + diphosphate</text>
        <dbReference type="Rhea" id="RHEA:21248"/>
        <dbReference type="Rhea" id="RHEA-COMP:14527"/>
        <dbReference type="Rhea" id="RHEA-COMP:17342"/>
        <dbReference type="ChEBI" id="CHEBI:33019"/>
        <dbReference type="ChEBI" id="CHEBI:61557"/>
        <dbReference type="ChEBI" id="CHEBI:140395"/>
        <dbReference type="EC" id="2.7.7.6"/>
    </reaction>
</comment>
<comment type="cofactor">
    <cofactor evidence="1">
        <name>Zn(2+)</name>
        <dbReference type="ChEBI" id="CHEBI:29105"/>
    </cofactor>
    <text evidence="1">Binds 1 Zn(2+) ion per subunit.</text>
</comment>
<comment type="subunit">
    <text evidence="1">In plastids the minimal PEP RNA polymerase catalytic core is composed of four subunits: alpha, beta, beta', and beta''. When a (nuclear-encoded) sigma factor is associated with the core the holoenzyme is formed, which can initiate transcription.</text>
</comment>
<comment type="subcellular location">
    <subcellularLocation>
        <location>Plastid</location>
        <location>Cyanelle</location>
    </subcellularLocation>
</comment>
<comment type="similarity">
    <text evidence="1">Belongs to the RNA polymerase beta' chain family. RpoC2 subfamily.</text>
</comment>
<keyword id="KW-0194">Cyanelle</keyword>
<keyword id="KW-0240">DNA-directed RNA polymerase</keyword>
<keyword id="KW-0479">Metal-binding</keyword>
<keyword id="KW-0548">Nucleotidyltransferase</keyword>
<keyword id="KW-0934">Plastid</keyword>
<keyword id="KW-0804">Transcription</keyword>
<keyword id="KW-0808">Transferase</keyword>
<keyword id="KW-0862">Zinc</keyword>
<organism>
    <name type="scientific">Cyanophora paradoxa</name>
    <dbReference type="NCBI Taxonomy" id="2762"/>
    <lineage>
        <taxon>Eukaryota</taxon>
        <taxon>Glaucocystophyceae</taxon>
        <taxon>Cyanophoraceae</taxon>
        <taxon>Cyanophora</taxon>
    </lineage>
</organism>
<evidence type="ECO:0000255" key="1">
    <source>
        <dbReference type="HAMAP-Rule" id="MF_01324"/>
    </source>
</evidence>
<dbReference type="EC" id="2.7.7.6" evidence="1"/>
<dbReference type="EMBL" id="U30821">
    <property type="protein sequence ID" value="AAA81259.1"/>
    <property type="molecule type" value="Genomic_DNA"/>
</dbReference>
<dbReference type="PIR" id="T06916">
    <property type="entry name" value="T06916"/>
</dbReference>
<dbReference type="RefSeq" id="NP_043228.1">
    <property type="nucleotide sequence ID" value="NC_001675.1"/>
</dbReference>
<dbReference type="SMR" id="P48120"/>
<dbReference type="GeneID" id="801650"/>
<dbReference type="GO" id="GO:0009842">
    <property type="term" value="C:cyanelle"/>
    <property type="evidence" value="ECO:0007669"/>
    <property type="project" value="UniProtKB-SubCell"/>
</dbReference>
<dbReference type="GO" id="GO:0000428">
    <property type="term" value="C:DNA-directed RNA polymerase complex"/>
    <property type="evidence" value="ECO:0007669"/>
    <property type="project" value="UniProtKB-KW"/>
</dbReference>
<dbReference type="GO" id="GO:0005739">
    <property type="term" value="C:mitochondrion"/>
    <property type="evidence" value="ECO:0007669"/>
    <property type="project" value="GOC"/>
</dbReference>
<dbReference type="GO" id="GO:0003677">
    <property type="term" value="F:DNA binding"/>
    <property type="evidence" value="ECO:0007669"/>
    <property type="project" value="InterPro"/>
</dbReference>
<dbReference type="GO" id="GO:0003899">
    <property type="term" value="F:DNA-directed RNA polymerase activity"/>
    <property type="evidence" value="ECO:0007669"/>
    <property type="project" value="UniProtKB-EC"/>
</dbReference>
<dbReference type="GO" id="GO:0046872">
    <property type="term" value="F:metal ion binding"/>
    <property type="evidence" value="ECO:0007669"/>
    <property type="project" value="UniProtKB-KW"/>
</dbReference>
<dbReference type="GO" id="GO:0006351">
    <property type="term" value="P:DNA-templated transcription"/>
    <property type="evidence" value="ECO:0007669"/>
    <property type="project" value="InterPro"/>
</dbReference>
<dbReference type="CDD" id="cd02655">
    <property type="entry name" value="RNAP_beta'_C"/>
    <property type="match status" value="1"/>
</dbReference>
<dbReference type="FunFam" id="1.10.150.390:FF:000002">
    <property type="entry name" value="DNA-directed RNA polymerase subunit beta"/>
    <property type="match status" value="1"/>
</dbReference>
<dbReference type="Gene3D" id="1.10.132.30">
    <property type="match status" value="1"/>
</dbReference>
<dbReference type="Gene3D" id="1.10.150.390">
    <property type="match status" value="1"/>
</dbReference>
<dbReference type="Gene3D" id="1.10.1790.20">
    <property type="match status" value="1"/>
</dbReference>
<dbReference type="Gene3D" id="2.40.50.100">
    <property type="match status" value="1"/>
</dbReference>
<dbReference type="Gene3D" id="1.10.274.100">
    <property type="entry name" value="RNA polymerase Rpb1, domain 3"/>
    <property type="match status" value="1"/>
</dbReference>
<dbReference type="HAMAP" id="MF_01324">
    <property type="entry name" value="RNApol_bact_RpoC2"/>
    <property type="match status" value="1"/>
</dbReference>
<dbReference type="InterPro" id="IPR012756">
    <property type="entry name" value="DNA-dir_RpoC2_beta_pp"/>
</dbReference>
<dbReference type="InterPro" id="IPR045867">
    <property type="entry name" value="DNA-dir_RpoC_beta_prime"/>
</dbReference>
<dbReference type="InterPro" id="IPR007066">
    <property type="entry name" value="RNA_pol_Rpb1_3"/>
</dbReference>
<dbReference type="InterPro" id="IPR042102">
    <property type="entry name" value="RNA_pol_Rpb1_3_sf"/>
</dbReference>
<dbReference type="InterPro" id="IPR007083">
    <property type="entry name" value="RNA_pol_Rpb1_4"/>
</dbReference>
<dbReference type="InterPro" id="IPR007081">
    <property type="entry name" value="RNA_pol_Rpb1_5"/>
</dbReference>
<dbReference type="InterPro" id="IPR038120">
    <property type="entry name" value="Rpb1_funnel_sf"/>
</dbReference>
<dbReference type="NCBIfam" id="TIGR02388">
    <property type="entry name" value="rpoC2_cyan"/>
    <property type="match status" value="1"/>
</dbReference>
<dbReference type="PANTHER" id="PTHR19376">
    <property type="entry name" value="DNA-DIRECTED RNA POLYMERASE"/>
    <property type="match status" value="1"/>
</dbReference>
<dbReference type="PANTHER" id="PTHR19376:SF68">
    <property type="entry name" value="DNA-DIRECTED RNA POLYMERASE SUBUNIT BETA"/>
    <property type="match status" value="1"/>
</dbReference>
<dbReference type="Pfam" id="PF04983">
    <property type="entry name" value="RNA_pol_Rpb1_3"/>
    <property type="match status" value="1"/>
</dbReference>
<dbReference type="Pfam" id="PF05000">
    <property type="entry name" value="RNA_pol_Rpb1_4"/>
    <property type="match status" value="1"/>
</dbReference>
<dbReference type="Pfam" id="PF04998">
    <property type="entry name" value="RNA_pol_Rpb1_5"/>
    <property type="match status" value="2"/>
</dbReference>
<dbReference type="SUPFAM" id="SSF64484">
    <property type="entry name" value="beta and beta-prime subunits of DNA dependent RNA-polymerase"/>
    <property type="match status" value="1"/>
</dbReference>
<name>RPOC2_CYAPA</name>
<gene>
    <name evidence="1" type="primary">rpoC2</name>
</gene>